<reference key="1">
    <citation type="submission" date="2006-03" db="EMBL/GenBank/DDBJ databases">
        <title>Complete sequence of Rhodopseudomonas palustris BisB18.</title>
        <authorList>
            <consortium name="US DOE Joint Genome Institute"/>
            <person name="Copeland A."/>
            <person name="Lucas S."/>
            <person name="Lapidus A."/>
            <person name="Barry K."/>
            <person name="Detter J.C."/>
            <person name="Glavina del Rio T."/>
            <person name="Hammon N."/>
            <person name="Israni S."/>
            <person name="Dalin E."/>
            <person name="Tice H."/>
            <person name="Pitluck S."/>
            <person name="Chain P."/>
            <person name="Malfatti S."/>
            <person name="Shin M."/>
            <person name="Vergez L."/>
            <person name="Schmutz J."/>
            <person name="Larimer F."/>
            <person name="Land M."/>
            <person name="Hauser L."/>
            <person name="Pelletier D.A."/>
            <person name="Kyrpides N."/>
            <person name="Anderson I."/>
            <person name="Oda Y."/>
            <person name="Harwood C.S."/>
            <person name="Richardson P."/>
        </authorList>
    </citation>
    <scope>NUCLEOTIDE SEQUENCE [LARGE SCALE GENOMIC DNA]</scope>
    <source>
        <strain>BisB18</strain>
    </source>
</reference>
<dbReference type="EC" id="6.1.1.11" evidence="1"/>
<dbReference type="EMBL" id="CP000301">
    <property type="protein sequence ID" value="ABD88068.1"/>
    <property type="molecule type" value="Genomic_DNA"/>
</dbReference>
<dbReference type="SMR" id="Q214W8"/>
<dbReference type="STRING" id="316056.RPC_2517"/>
<dbReference type="KEGG" id="rpc:RPC_2517"/>
<dbReference type="eggNOG" id="COG0172">
    <property type="taxonomic scope" value="Bacteria"/>
</dbReference>
<dbReference type="HOGENOM" id="CLU_023797_1_1_5"/>
<dbReference type="OrthoDB" id="9804647at2"/>
<dbReference type="UniPathway" id="UPA00906">
    <property type="reaction ID" value="UER00895"/>
</dbReference>
<dbReference type="GO" id="GO:0005737">
    <property type="term" value="C:cytoplasm"/>
    <property type="evidence" value="ECO:0007669"/>
    <property type="project" value="UniProtKB-SubCell"/>
</dbReference>
<dbReference type="GO" id="GO:0005524">
    <property type="term" value="F:ATP binding"/>
    <property type="evidence" value="ECO:0007669"/>
    <property type="project" value="UniProtKB-UniRule"/>
</dbReference>
<dbReference type="GO" id="GO:0004828">
    <property type="term" value="F:serine-tRNA ligase activity"/>
    <property type="evidence" value="ECO:0007669"/>
    <property type="project" value="UniProtKB-UniRule"/>
</dbReference>
<dbReference type="GO" id="GO:0016260">
    <property type="term" value="P:selenocysteine biosynthetic process"/>
    <property type="evidence" value="ECO:0007669"/>
    <property type="project" value="UniProtKB-UniRule"/>
</dbReference>
<dbReference type="GO" id="GO:0006434">
    <property type="term" value="P:seryl-tRNA aminoacylation"/>
    <property type="evidence" value="ECO:0007669"/>
    <property type="project" value="UniProtKB-UniRule"/>
</dbReference>
<dbReference type="CDD" id="cd00770">
    <property type="entry name" value="SerRS_core"/>
    <property type="match status" value="1"/>
</dbReference>
<dbReference type="Gene3D" id="3.30.930.10">
    <property type="entry name" value="Bira Bifunctional Protein, Domain 2"/>
    <property type="match status" value="1"/>
</dbReference>
<dbReference type="Gene3D" id="1.10.287.40">
    <property type="entry name" value="Serine-tRNA synthetase, tRNA binding domain"/>
    <property type="match status" value="1"/>
</dbReference>
<dbReference type="HAMAP" id="MF_00176">
    <property type="entry name" value="Ser_tRNA_synth_type1"/>
    <property type="match status" value="1"/>
</dbReference>
<dbReference type="InterPro" id="IPR002314">
    <property type="entry name" value="aa-tRNA-synt_IIb"/>
</dbReference>
<dbReference type="InterPro" id="IPR006195">
    <property type="entry name" value="aa-tRNA-synth_II"/>
</dbReference>
<dbReference type="InterPro" id="IPR045864">
    <property type="entry name" value="aa-tRNA-synth_II/BPL/LPL"/>
</dbReference>
<dbReference type="InterPro" id="IPR002317">
    <property type="entry name" value="Ser-tRNA-ligase_type_1"/>
</dbReference>
<dbReference type="InterPro" id="IPR015866">
    <property type="entry name" value="Ser-tRNA-synth_1_N"/>
</dbReference>
<dbReference type="InterPro" id="IPR042103">
    <property type="entry name" value="SerRS_1_N_sf"/>
</dbReference>
<dbReference type="InterPro" id="IPR033729">
    <property type="entry name" value="SerRS_core"/>
</dbReference>
<dbReference type="InterPro" id="IPR010978">
    <property type="entry name" value="tRNA-bd_arm"/>
</dbReference>
<dbReference type="NCBIfam" id="TIGR00414">
    <property type="entry name" value="serS"/>
    <property type="match status" value="1"/>
</dbReference>
<dbReference type="PANTHER" id="PTHR43697:SF1">
    <property type="entry name" value="SERINE--TRNA LIGASE"/>
    <property type="match status" value="1"/>
</dbReference>
<dbReference type="PANTHER" id="PTHR43697">
    <property type="entry name" value="SERYL-TRNA SYNTHETASE"/>
    <property type="match status" value="1"/>
</dbReference>
<dbReference type="Pfam" id="PF02403">
    <property type="entry name" value="Seryl_tRNA_N"/>
    <property type="match status" value="1"/>
</dbReference>
<dbReference type="Pfam" id="PF00587">
    <property type="entry name" value="tRNA-synt_2b"/>
    <property type="match status" value="1"/>
</dbReference>
<dbReference type="PIRSF" id="PIRSF001529">
    <property type="entry name" value="Ser-tRNA-synth_IIa"/>
    <property type="match status" value="1"/>
</dbReference>
<dbReference type="PRINTS" id="PR00981">
    <property type="entry name" value="TRNASYNTHSER"/>
</dbReference>
<dbReference type="SUPFAM" id="SSF55681">
    <property type="entry name" value="Class II aaRS and biotin synthetases"/>
    <property type="match status" value="1"/>
</dbReference>
<dbReference type="SUPFAM" id="SSF46589">
    <property type="entry name" value="tRNA-binding arm"/>
    <property type="match status" value="1"/>
</dbReference>
<dbReference type="PROSITE" id="PS50862">
    <property type="entry name" value="AA_TRNA_LIGASE_II"/>
    <property type="match status" value="1"/>
</dbReference>
<protein>
    <recommendedName>
        <fullName evidence="1">Serine--tRNA ligase</fullName>
        <ecNumber evidence="1">6.1.1.11</ecNumber>
    </recommendedName>
    <alternativeName>
        <fullName evidence="1">Seryl-tRNA synthetase</fullName>
        <shortName evidence="1">SerRS</shortName>
    </alternativeName>
    <alternativeName>
        <fullName evidence="1">Seryl-tRNA(Ser/Sec) synthetase</fullName>
    </alternativeName>
</protein>
<name>SYS_RHOPB</name>
<proteinExistence type="inferred from homology"/>
<gene>
    <name evidence="1" type="primary">serS</name>
    <name type="ordered locus">RPC_2517</name>
</gene>
<feature type="chain" id="PRO_1000019794" description="Serine--tRNA ligase">
    <location>
        <begin position="1"/>
        <end position="481"/>
    </location>
</feature>
<feature type="binding site" evidence="1">
    <location>
        <begin position="284"/>
        <end position="286"/>
    </location>
    <ligand>
        <name>L-serine</name>
        <dbReference type="ChEBI" id="CHEBI:33384"/>
    </ligand>
</feature>
<feature type="binding site" evidence="1">
    <location>
        <begin position="315"/>
        <end position="317"/>
    </location>
    <ligand>
        <name>ATP</name>
        <dbReference type="ChEBI" id="CHEBI:30616"/>
    </ligand>
</feature>
<feature type="binding site" evidence="1">
    <location>
        <position position="338"/>
    </location>
    <ligand>
        <name>L-serine</name>
        <dbReference type="ChEBI" id="CHEBI:33384"/>
    </ligand>
</feature>
<feature type="binding site" evidence="1">
    <location>
        <begin position="405"/>
        <end position="408"/>
    </location>
    <ligand>
        <name>ATP</name>
        <dbReference type="ChEBI" id="CHEBI:30616"/>
    </ligand>
</feature>
<feature type="binding site" evidence="1">
    <location>
        <position position="440"/>
    </location>
    <ligand>
        <name>L-serine</name>
        <dbReference type="ChEBI" id="CHEBI:33384"/>
    </ligand>
</feature>
<accession>Q214W8</accession>
<keyword id="KW-0030">Aminoacyl-tRNA synthetase</keyword>
<keyword id="KW-0067">ATP-binding</keyword>
<keyword id="KW-0963">Cytoplasm</keyword>
<keyword id="KW-0436">Ligase</keyword>
<keyword id="KW-0547">Nucleotide-binding</keyword>
<keyword id="KW-0648">Protein biosynthesis</keyword>
<sequence length="481" mass="53736">MHDIKAIRDNPTAFDDAYTRRGLAPIAQSLIDKDDARRKAILASEQAQARRNAASKEIGDAKKAKDNVRAEALMAEVAELKTTMPALDAAVKDADAALKKALSEIPNLPLADVPEGKDEHDNEVRSHYGVKRSYAFTPKPHYELGEALKQMDFEAAAKLSGARFVVLKKGLARLERAIGQFFLDVHTEEHGYTEVNPPLLVRDEAMFGTAQLPKFEDDQFFVGNGNNVRRLQQEMRATIEADDVKNIPDMFVPKSKYDRLLENYLRLETEQIALELTRRWLIPTAEVPLTNLVRESILDEKELPLRMTALTQCFRAEAGAAGRDTRGMIRQHQFTKVELVSVTTPEQSKDEHERMLSCAEEVLRRLELHYRVMTLCTGDMGFASQKTYDIEVWMPGQGEGGAYREISSCSVCGDFQARRMDARSRGPDGKPRFVHTLNGSGTAVGRALIAVIENYQQEDGSIAVPTVLQRYMGGLKVISNG</sequence>
<evidence type="ECO:0000255" key="1">
    <source>
        <dbReference type="HAMAP-Rule" id="MF_00176"/>
    </source>
</evidence>
<organism>
    <name type="scientific">Rhodopseudomonas palustris (strain BisB18)</name>
    <dbReference type="NCBI Taxonomy" id="316056"/>
    <lineage>
        <taxon>Bacteria</taxon>
        <taxon>Pseudomonadati</taxon>
        <taxon>Pseudomonadota</taxon>
        <taxon>Alphaproteobacteria</taxon>
        <taxon>Hyphomicrobiales</taxon>
        <taxon>Nitrobacteraceae</taxon>
        <taxon>Rhodopseudomonas</taxon>
    </lineage>
</organism>
<comment type="function">
    <text evidence="1">Catalyzes the attachment of serine to tRNA(Ser). Is also able to aminoacylate tRNA(Sec) with serine, to form the misacylated tRNA L-seryl-tRNA(Sec), which will be further converted into selenocysteinyl-tRNA(Sec).</text>
</comment>
<comment type="catalytic activity">
    <reaction evidence="1">
        <text>tRNA(Ser) + L-serine + ATP = L-seryl-tRNA(Ser) + AMP + diphosphate + H(+)</text>
        <dbReference type="Rhea" id="RHEA:12292"/>
        <dbReference type="Rhea" id="RHEA-COMP:9669"/>
        <dbReference type="Rhea" id="RHEA-COMP:9703"/>
        <dbReference type="ChEBI" id="CHEBI:15378"/>
        <dbReference type="ChEBI" id="CHEBI:30616"/>
        <dbReference type="ChEBI" id="CHEBI:33019"/>
        <dbReference type="ChEBI" id="CHEBI:33384"/>
        <dbReference type="ChEBI" id="CHEBI:78442"/>
        <dbReference type="ChEBI" id="CHEBI:78533"/>
        <dbReference type="ChEBI" id="CHEBI:456215"/>
        <dbReference type="EC" id="6.1.1.11"/>
    </reaction>
</comment>
<comment type="catalytic activity">
    <reaction evidence="1">
        <text>tRNA(Sec) + L-serine + ATP = L-seryl-tRNA(Sec) + AMP + diphosphate + H(+)</text>
        <dbReference type="Rhea" id="RHEA:42580"/>
        <dbReference type="Rhea" id="RHEA-COMP:9742"/>
        <dbReference type="Rhea" id="RHEA-COMP:10128"/>
        <dbReference type="ChEBI" id="CHEBI:15378"/>
        <dbReference type="ChEBI" id="CHEBI:30616"/>
        <dbReference type="ChEBI" id="CHEBI:33019"/>
        <dbReference type="ChEBI" id="CHEBI:33384"/>
        <dbReference type="ChEBI" id="CHEBI:78442"/>
        <dbReference type="ChEBI" id="CHEBI:78533"/>
        <dbReference type="ChEBI" id="CHEBI:456215"/>
        <dbReference type="EC" id="6.1.1.11"/>
    </reaction>
</comment>
<comment type="pathway">
    <text evidence="1">Aminoacyl-tRNA biosynthesis; selenocysteinyl-tRNA(Sec) biosynthesis; L-seryl-tRNA(Sec) from L-serine and tRNA(Sec): step 1/1.</text>
</comment>
<comment type="subunit">
    <text evidence="1">Homodimer. The tRNA molecule binds across the dimer.</text>
</comment>
<comment type="subcellular location">
    <subcellularLocation>
        <location evidence="1">Cytoplasm</location>
    </subcellularLocation>
</comment>
<comment type="domain">
    <text evidence="1">Consists of two distinct domains, a catalytic core and a N-terminal extension that is involved in tRNA binding.</text>
</comment>
<comment type="similarity">
    <text evidence="1">Belongs to the class-II aminoacyl-tRNA synthetase family. Type-1 seryl-tRNA synthetase subfamily.</text>
</comment>